<reference key="1">
    <citation type="submission" date="2006-02" db="EMBL/GenBank/DDBJ databases">
        <title>Complete sequence of chromosome of Rhodoferax ferrireducens DSM 15236.</title>
        <authorList>
            <person name="Copeland A."/>
            <person name="Lucas S."/>
            <person name="Lapidus A."/>
            <person name="Barry K."/>
            <person name="Detter J.C."/>
            <person name="Glavina del Rio T."/>
            <person name="Hammon N."/>
            <person name="Israni S."/>
            <person name="Pitluck S."/>
            <person name="Brettin T."/>
            <person name="Bruce D."/>
            <person name="Han C."/>
            <person name="Tapia R."/>
            <person name="Gilna P."/>
            <person name="Kiss H."/>
            <person name="Schmutz J."/>
            <person name="Larimer F."/>
            <person name="Land M."/>
            <person name="Kyrpides N."/>
            <person name="Ivanova N."/>
            <person name="Richardson P."/>
        </authorList>
    </citation>
    <scope>NUCLEOTIDE SEQUENCE [LARGE SCALE GENOMIC DNA]</scope>
    <source>
        <strain>ATCC BAA-621 / DSM 15236 / T118</strain>
    </source>
</reference>
<gene>
    <name evidence="1" type="primary">mdh2</name>
    <name type="ordered locus">Rfer_2403</name>
</gene>
<accession>Q21VT3</accession>
<dbReference type="EC" id="1.1.1.37" evidence="1"/>
<dbReference type="EMBL" id="CP000267">
    <property type="protein sequence ID" value="ABD70120.1"/>
    <property type="molecule type" value="Genomic_DNA"/>
</dbReference>
<dbReference type="RefSeq" id="WP_011464688.1">
    <property type="nucleotide sequence ID" value="NC_007908.1"/>
</dbReference>
<dbReference type="SMR" id="Q21VT3"/>
<dbReference type="STRING" id="338969.Rfer_2403"/>
<dbReference type="KEGG" id="rfr:Rfer_2403"/>
<dbReference type="eggNOG" id="COG0039">
    <property type="taxonomic scope" value="Bacteria"/>
</dbReference>
<dbReference type="HOGENOM" id="CLU_040727_2_0_4"/>
<dbReference type="OrthoDB" id="9802969at2"/>
<dbReference type="Proteomes" id="UP000008332">
    <property type="component" value="Chromosome"/>
</dbReference>
<dbReference type="GO" id="GO:0030060">
    <property type="term" value="F:L-malate dehydrogenase (NAD+) activity"/>
    <property type="evidence" value="ECO:0007669"/>
    <property type="project" value="UniProtKB-UniRule"/>
</dbReference>
<dbReference type="GO" id="GO:0006108">
    <property type="term" value="P:malate metabolic process"/>
    <property type="evidence" value="ECO:0007669"/>
    <property type="project" value="InterPro"/>
</dbReference>
<dbReference type="GO" id="GO:0006099">
    <property type="term" value="P:tricarboxylic acid cycle"/>
    <property type="evidence" value="ECO:0007669"/>
    <property type="project" value="UniProtKB-UniRule"/>
</dbReference>
<dbReference type="CDD" id="cd01338">
    <property type="entry name" value="MDH_chloroplast-like"/>
    <property type="match status" value="1"/>
</dbReference>
<dbReference type="FunFam" id="3.40.50.720:FF:000010">
    <property type="entry name" value="Malate dehydrogenase"/>
    <property type="match status" value="1"/>
</dbReference>
<dbReference type="Gene3D" id="3.90.110.10">
    <property type="entry name" value="Lactate dehydrogenase/glycoside hydrolase, family 4, C-terminal"/>
    <property type="match status" value="1"/>
</dbReference>
<dbReference type="Gene3D" id="3.40.50.720">
    <property type="entry name" value="NAD(P)-binding Rossmann-like Domain"/>
    <property type="match status" value="1"/>
</dbReference>
<dbReference type="HAMAP" id="MF_01517">
    <property type="entry name" value="Malate_dehydrog_2"/>
    <property type="match status" value="1"/>
</dbReference>
<dbReference type="InterPro" id="IPR001557">
    <property type="entry name" value="L-lactate/malate_DH"/>
</dbReference>
<dbReference type="InterPro" id="IPR022383">
    <property type="entry name" value="Lactate/malate_DH_C"/>
</dbReference>
<dbReference type="InterPro" id="IPR001236">
    <property type="entry name" value="Lactate/malate_DH_N"/>
</dbReference>
<dbReference type="InterPro" id="IPR015955">
    <property type="entry name" value="Lactate_DH/Glyco_Ohase_4_C"/>
</dbReference>
<dbReference type="InterPro" id="IPR010945">
    <property type="entry name" value="Malate_DH_type2"/>
</dbReference>
<dbReference type="InterPro" id="IPR036291">
    <property type="entry name" value="NAD(P)-bd_dom_sf"/>
</dbReference>
<dbReference type="NCBIfam" id="TIGR01759">
    <property type="entry name" value="MalateDH-SF1"/>
    <property type="match status" value="1"/>
</dbReference>
<dbReference type="NCBIfam" id="NF003916">
    <property type="entry name" value="PRK05442.1"/>
    <property type="match status" value="1"/>
</dbReference>
<dbReference type="PANTHER" id="PTHR23382">
    <property type="entry name" value="MALATE DEHYDROGENASE"/>
    <property type="match status" value="1"/>
</dbReference>
<dbReference type="Pfam" id="PF02866">
    <property type="entry name" value="Ldh_1_C"/>
    <property type="match status" value="1"/>
</dbReference>
<dbReference type="Pfam" id="PF00056">
    <property type="entry name" value="Ldh_1_N"/>
    <property type="match status" value="1"/>
</dbReference>
<dbReference type="PIRSF" id="PIRSF000102">
    <property type="entry name" value="Lac_mal_DH"/>
    <property type="match status" value="1"/>
</dbReference>
<dbReference type="SUPFAM" id="SSF56327">
    <property type="entry name" value="LDH C-terminal domain-like"/>
    <property type="match status" value="1"/>
</dbReference>
<dbReference type="SUPFAM" id="SSF51735">
    <property type="entry name" value="NAD(P)-binding Rossmann-fold domains"/>
    <property type="match status" value="1"/>
</dbReference>
<feature type="chain" id="PRO_0000294404" description="Malate dehydrogenase 2">
    <location>
        <begin position="1"/>
        <end position="334"/>
    </location>
</feature>
<feature type="active site" description="Proton acceptor" evidence="1">
    <location>
        <position position="191"/>
    </location>
</feature>
<feature type="binding site" evidence="1">
    <location>
        <begin position="12"/>
        <end position="18"/>
    </location>
    <ligand>
        <name>NAD(+)</name>
        <dbReference type="ChEBI" id="CHEBI:57540"/>
    </ligand>
</feature>
<feature type="binding site" evidence="1">
    <location>
        <position position="93"/>
    </location>
    <ligand>
        <name>substrate</name>
    </ligand>
</feature>
<feature type="binding site" evidence="1">
    <location>
        <position position="99"/>
    </location>
    <ligand>
        <name>substrate</name>
    </ligand>
</feature>
<feature type="binding site" evidence="1">
    <location>
        <position position="106"/>
    </location>
    <ligand>
        <name>NAD(+)</name>
        <dbReference type="ChEBI" id="CHEBI:57540"/>
    </ligand>
</feature>
<feature type="binding site" evidence="1">
    <location>
        <position position="113"/>
    </location>
    <ligand>
        <name>NAD(+)</name>
        <dbReference type="ChEBI" id="CHEBI:57540"/>
    </ligand>
</feature>
<feature type="binding site" evidence="1">
    <location>
        <begin position="130"/>
        <end position="132"/>
    </location>
    <ligand>
        <name>NAD(+)</name>
        <dbReference type="ChEBI" id="CHEBI:57540"/>
    </ligand>
</feature>
<feature type="binding site" evidence="1">
    <location>
        <position position="132"/>
    </location>
    <ligand>
        <name>substrate</name>
    </ligand>
</feature>
<feature type="binding site" evidence="1">
    <location>
        <position position="166"/>
    </location>
    <ligand>
        <name>substrate</name>
    </ligand>
</feature>
<keyword id="KW-0520">NAD</keyword>
<keyword id="KW-0560">Oxidoreductase</keyword>
<keyword id="KW-1185">Reference proteome</keyword>
<keyword id="KW-0816">Tricarboxylic acid cycle</keyword>
<name>MDH2_ALBFT</name>
<protein>
    <recommendedName>
        <fullName evidence="1">Malate dehydrogenase 2</fullName>
        <ecNumber evidence="1">1.1.1.37</ecNumber>
    </recommendedName>
</protein>
<sequence>MNQAPVRVTVTGAAGRVAYALLFRIASGDMLGADQPVQLVLFDLPHAMKAMQGVVMELEDCAFPLLTEIIATDDPVLAFSDTQIALLVSARPRAVGAERLEVLADNAKIFAAQGAVIGRHANPDCKVLVVGNPCNTNACVAMKAAQKFSRIPARNFAALLRLDHNRALAQLALKTGRPVGGVKRLAVWGNHSPTVYADDRFTTIDGDSVPAIIDNIAWHHDTLVRTVDKRGEAILAARGLYAEASAASAAIDQMRDWWLGTRGEWTTMGVVSDGAYGVPAGLVFGFPVITDCRDYRIVPGLAVDAFARGMIDVNVRELTAELEIVKPLLPELFG</sequence>
<evidence type="ECO:0000255" key="1">
    <source>
        <dbReference type="HAMAP-Rule" id="MF_01517"/>
    </source>
</evidence>
<comment type="function">
    <text evidence="1">Catalyzes the reversible oxidation of malate to oxaloacetate.</text>
</comment>
<comment type="catalytic activity">
    <reaction evidence="1">
        <text>(S)-malate + NAD(+) = oxaloacetate + NADH + H(+)</text>
        <dbReference type="Rhea" id="RHEA:21432"/>
        <dbReference type="ChEBI" id="CHEBI:15378"/>
        <dbReference type="ChEBI" id="CHEBI:15589"/>
        <dbReference type="ChEBI" id="CHEBI:16452"/>
        <dbReference type="ChEBI" id="CHEBI:57540"/>
        <dbReference type="ChEBI" id="CHEBI:57945"/>
        <dbReference type="EC" id="1.1.1.37"/>
    </reaction>
</comment>
<comment type="similarity">
    <text evidence="1">Belongs to the LDH/MDH superfamily. MDH type 2 family.</text>
</comment>
<proteinExistence type="inferred from homology"/>
<organism>
    <name type="scientific">Albidiferax ferrireducens (strain ATCC BAA-621 / DSM 15236 / T118)</name>
    <name type="common">Rhodoferax ferrireducens</name>
    <dbReference type="NCBI Taxonomy" id="338969"/>
    <lineage>
        <taxon>Bacteria</taxon>
        <taxon>Pseudomonadati</taxon>
        <taxon>Pseudomonadota</taxon>
        <taxon>Betaproteobacteria</taxon>
        <taxon>Burkholderiales</taxon>
        <taxon>Comamonadaceae</taxon>
        <taxon>Rhodoferax</taxon>
    </lineage>
</organism>